<reference key="1">
    <citation type="journal article" date="2001" name="Genetics">
        <title>Analysis of the pdx-1 (snz-1/sno-1) region of the Neurospora crassa genome. Correlation of pyridoxine-requiring phenotypes with mutations in two structural genes.</title>
        <authorList>
            <person name="Bean L.E."/>
            <person name="Dvorachek W.H. Jr."/>
            <person name="Braun E.L."/>
            <person name="Errett A."/>
            <person name="Saenz G.S."/>
            <person name="Giles M.D."/>
            <person name="Werner-Washburne M."/>
            <person name="Nelson M.A."/>
            <person name="Natvig D.O."/>
        </authorList>
    </citation>
    <scope>NUCLEOTIDE SEQUENCE [GENOMIC DNA]</scope>
    <source>
        <strain>ATCC 24698 / 74-OR23-1A / CBS 708.71 / DSM 1257 / FGSC 987</strain>
    </source>
</reference>
<reference key="2">
    <citation type="journal article" date="2003" name="Nature">
        <title>The genome sequence of the filamentous fungus Neurospora crassa.</title>
        <authorList>
            <person name="Galagan J.E."/>
            <person name="Calvo S.E."/>
            <person name="Borkovich K.A."/>
            <person name="Selker E.U."/>
            <person name="Read N.D."/>
            <person name="Jaffe D.B."/>
            <person name="FitzHugh W."/>
            <person name="Ma L.-J."/>
            <person name="Smirnov S."/>
            <person name="Purcell S."/>
            <person name="Rehman B."/>
            <person name="Elkins T."/>
            <person name="Engels R."/>
            <person name="Wang S."/>
            <person name="Nielsen C.B."/>
            <person name="Butler J."/>
            <person name="Endrizzi M."/>
            <person name="Qui D."/>
            <person name="Ianakiev P."/>
            <person name="Bell-Pedersen D."/>
            <person name="Nelson M.A."/>
            <person name="Werner-Washburne M."/>
            <person name="Selitrennikoff C.P."/>
            <person name="Kinsey J.A."/>
            <person name="Braun E.L."/>
            <person name="Zelter A."/>
            <person name="Schulte U."/>
            <person name="Kothe G.O."/>
            <person name="Jedd G."/>
            <person name="Mewes H.-W."/>
            <person name="Staben C."/>
            <person name="Marcotte E."/>
            <person name="Greenberg D."/>
            <person name="Roy A."/>
            <person name="Foley K."/>
            <person name="Naylor J."/>
            <person name="Stange-Thomann N."/>
            <person name="Barrett R."/>
            <person name="Gnerre S."/>
            <person name="Kamal M."/>
            <person name="Kamvysselis M."/>
            <person name="Mauceli E.W."/>
            <person name="Bielke C."/>
            <person name="Rudd S."/>
            <person name="Frishman D."/>
            <person name="Krystofova S."/>
            <person name="Rasmussen C."/>
            <person name="Metzenberg R.L."/>
            <person name="Perkins D.D."/>
            <person name="Kroken S."/>
            <person name="Cogoni C."/>
            <person name="Macino G."/>
            <person name="Catcheside D.E.A."/>
            <person name="Li W."/>
            <person name="Pratt R.J."/>
            <person name="Osmani S.A."/>
            <person name="DeSouza C.P.C."/>
            <person name="Glass N.L."/>
            <person name="Orbach M.J."/>
            <person name="Berglund J.A."/>
            <person name="Voelker R."/>
            <person name="Yarden O."/>
            <person name="Plamann M."/>
            <person name="Seiler S."/>
            <person name="Dunlap J.C."/>
            <person name="Radford A."/>
            <person name="Aramayo R."/>
            <person name="Natvig D.O."/>
            <person name="Alex L.A."/>
            <person name="Mannhaupt G."/>
            <person name="Ebbole D.J."/>
            <person name="Freitag M."/>
            <person name="Paulsen I."/>
            <person name="Sachs M.S."/>
            <person name="Lander E.S."/>
            <person name="Nusbaum C."/>
            <person name="Birren B.W."/>
        </authorList>
    </citation>
    <scope>NUCLEOTIDE SEQUENCE [LARGE SCALE GENOMIC DNA]</scope>
    <source>
        <strain>ATCC 24698 / 74-OR23-1A / CBS 708.71 / DSM 1257 / FGSC 987</strain>
    </source>
</reference>
<accession>Q9C1K8</accession>
<organism>
    <name type="scientific">Neurospora crassa (strain ATCC 24698 / 74-OR23-1A / CBS 708.71 / DSM 1257 / FGSC 987)</name>
    <dbReference type="NCBI Taxonomy" id="367110"/>
    <lineage>
        <taxon>Eukaryota</taxon>
        <taxon>Fungi</taxon>
        <taxon>Dikarya</taxon>
        <taxon>Ascomycota</taxon>
        <taxon>Pezizomycotina</taxon>
        <taxon>Sordariomycetes</taxon>
        <taxon>Sordariomycetidae</taxon>
        <taxon>Sordariales</taxon>
        <taxon>Sordariaceae</taxon>
        <taxon>Neurospora</taxon>
    </lineage>
</organism>
<comment type="function">
    <text evidence="1">Dol-P-Man:Man(5)GlcNAc(2)-PP-Dol alpha-1,3-mannosyltransferase that operates in the biosynthetic pathway of dolichol-linked oligosaccharides, the glycan precursors employed in protein asparagine (N)-glycosylation. The assembly of dolichol-linked oligosaccharides begins on the cytosolic side of the endoplasmic reticulum membrane and finishes in its lumen. The sequential addition of sugars to dolichol pyrophosphate produces dolichol-linked oligosaccharides containing fourteen sugars, including two GlcNAcs, nine mannoses and three glucoses. Once assembled, the oligosaccharide is transferred from the lipid to nascent proteins by oligosaccharyltransferases. In the lumen of the endoplasmic reticulum, adds the first dolichyl beta-D-mannosyl phosphate derived mannose in an alpha-1,3 linkage to Man(5)GlcNAc(2)-PP-dolichol to produce Man(6)GlcNAc(2)-PP-dolichol.</text>
</comment>
<comment type="catalytic activity">
    <reaction evidence="1">
        <text>an alpha-D-Man-(1-&gt;2)-alpha-D-Man-(1-&gt;2)-alpha-D-Man-(1-&gt;3)-[alpha-D-Man-(1-&gt;6)]-beta-D-Man-(1-&gt;4)-beta-D-GlcNAc-(1-&gt;4)-alpha-D-GlcNAc-diphospho-di-trans,poly-cis-dolichol + a di-trans,poly-cis-dolichyl beta-D-mannosyl phosphate = an alpha-D-Man-(1-&gt;2)-alpha-D-Man-(1-&gt;2)-alpha-D-Man-(1-&gt;3)-[alpha-D-Man-(1-&gt;3)-alpha-D-Man-(1-&gt;6)]-beta-D-Man-(1-&gt;4)-beta-D-GlcNAc-(1-&gt;4)-alpha-D-GlcNAc-diphospho-di-trans,poly-cis-dolichol + a di-trans,poly-cis-dolichyl phosphate + H(+)</text>
        <dbReference type="Rhea" id="RHEA:29527"/>
        <dbReference type="Rhea" id="RHEA-COMP:19498"/>
        <dbReference type="Rhea" id="RHEA-COMP:19501"/>
        <dbReference type="Rhea" id="RHEA-COMP:19516"/>
        <dbReference type="Rhea" id="RHEA-COMP:19517"/>
        <dbReference type="ChEBI" id="CHEBI:15378"/>
        <dbReference type="ChEBI" id="CHEBI:57683"/>
        <dbReference type="ChEBI" id="CHEBI:58211"/>
        <dbReference type="ChEBI" id="CHEBI:132515"/>
        <dbReference type="ChEBI" id="CHEBI:132516"/>
        <dbReference type="EC" id="2.4.1.258"/>
    </reaction>
    <physiologicalReaction direction="left-to-right" evidence="1">
        <dbReference type="Rhea" id="RHEA:29528"/>
    </physiologicalReaction>
</comment>
<comment type="pathway">
    <text evidence="1">Protein modification; protein glycosylation.</text>
</comment>
<comment type="subcellular location">
    <subcellularLocation>
        <location evidence="1">Endoplasmic reticulum membrane</location>
        <topology evidence="2">Multi-pass membrane protein</topology>
    </subcellularLocation>
</comment>
<comment type="similarity">
    <text evidence="3">Belongs to the glycosyltransferase ALG3 family.</text>
</comment>
<dbReference type="EC" id="2.4.1.258" evidence="1"/>
<dbReference type="EMBL" id="AF309689">
    <property type="protein sequence ID" value="AAK07848.1"/>
    <property type="molecule type" value="Genomic_DNA"/>
</dbReference>
<dbReference type="EMBL" id="CM002239">
    <property type="protein sequence ID" value="EAA33023.1"/>
    <property type="molecule type" value="Genomic_DNA"/>
</dbReference>
<dbReference type="RefSeq" id="XP_962259.1">
    <property type="nucleotide sequence ID" value="XM_957166.2"/>
</dbReference>
<dbReference type="FunCoup" id="Q9C1K8">
    <property type="interactions" value="634"/>
</dbReference>
<dbReference type="STRING" id="367110.Q9C1K8"/>
<dbReference type="CAZy" id="GT58">
    <property type="family name" value="Glycosyltransferase Family 58"/>
</dbReference>
<dbReference type="PaxDb" id="5141-EFNCRP00000006395"/>
<dbReference type="EnsemblFungi" id="EAA33023">
    <property type="protein sequence ID" value="EAA33023"/>
    <property type="gene ID" value="NCU06552"/>
</dbReference>
<dbReference type="GeneID" id="3878417"/>
<dbReference type="KEGG" id="ncr:NCU06552"/>
<dbReference type="VEuPathDB" id="FungiDB:NCU06552"/>
<dbReference type="HOGENOM" id="CLU_035382_3_0_1"/>
<dbReference type="InParanoid" id="Q9C1K8"/>
<dbReference type="OMA" id="PERYGIH"/>
<dbReference type="OrthoDB" id="20028at2759"/>
<dbReference type="UniPathway" id="UPA00378"/>
<dbReference type="Proteomes" id="UP000001805">
    <property type="component" value="Chromosome 4, Linkage Group IV"/>
</dbReference>
<dbReference type="GO" id="GO:0005783">
    <property type="term" value="C:endoplasmic reticulum"/>
    <property type="evidence" value="ECO:0000318"/>
    <property type="project" value="GO_Central"/>
</dbReference>
<dbReference type="GO" id="GO:0005789">
    <property type="term" value="C:endoplasmic reticulum membrane"/>
    <property type="evidence" value="ECO:0007669"/>
    <property type="project" value="UniProtKB-SubCell"/>
</dbReference>
<dbReference type="GO" id="GO:0052925">
    <property type="term" value="F:dol-P-Man:Man(5)GlcNAc(2)-PP-Dol alpha-1,3-mannosyltransferase activity"/>
    <property type="evidence" value="ECO:0000318"/>
    <property type="project" value="GO_Central"/>
</dbReference>
<dbReference type="GO" id="GO:0006488">
    <property type="term" value="P:dolichol-linked oligosaccharide biosynthetic process"/>
    <property type="evidence" value="ECO:0007669"/>
    <property type="project" value="EnsemblFungi"/>
</dbReference>
<dbReference type="GO" id="GO:0006486">
    <property type="term" value="P:protein glycosylation"/>
    <property type="evidence" value="ECO:0000318"/>
    <property type="project" value="GO_Central"/>
</dbReference>
<dbReference type="InterPro" id="IPR007873">
    <property type="entry name" value="Glycosyltransferase_ALG3"/>
</dbReference>
<dbReference type="PANTHER" id="PTHR12646:SF0">
    <property type="entry name" value="DOL-P-MAN:MAN(5)GLCNAC(2)-PP-DOL ALPHA-1,3-MANNOSYLTRANSFERASE"/>
    <property type="match status" value="1"/>
</dbReference>
<dbReference type="PANTHER" id="PTHR12646">
    <property type="entry name" value="NOT56 - RELATED"/>
    <property type="match status" value="1"/>
</dbReference>
<dbReference type="Pfam" id="PF05208">
    <property type="entry name" value="ALG3"/>
    <property type="match status" value="1"/>
</dbReference>
<feature type="chain" id="PRO_0000350929" description="Dol-P-Man:Man(5)GlcNAc(2)-PP-Dol alpha-1,3-mannosyltransferase">
    <location>
        <begin position="1"/>
        <end position="442"/>
    </location>
</feature>
<feature type="topological domain" description="Lumenal" evidence="2">
    <location>
        <begin position="1"/>
        <end position="34"/>
    </location>
</feature>
<feature type="transmembrane region" description="Helical" evidence="2">
    <location>
        <begin position="35"/>
        <end position="55"/>
    </location>
</feature>
<feature type="topological domain" description="Cytoplasmic" evidence="2">
    <location>
        <begin position="56"/>
        <end position="84"/>
    </location>
</feature>
<feature type="transmembrane region" description="Helical" evidence="2">
    <location>
        <begin position="85"/>
        <end position="105"/>
    </location>
</feature>
<feature type="topological domain" description="Lumenal" evidence="2">
    <location>
        <begin position="106"/>
        <end position="111"/>
    </location>
</feature>
<feature type="transmembrane region" description="Helical" evidence="2">
    <location>
        <begin position="112"/>
        <end position="132"/>
    </location>
</feature>
<feature type="topological domain" description="Cytoplasmic" evidence="2">
    <location>
        <begin position="133"/>
        <end position="155"/>
    </location>
</feature>
<feature type="transmembrane region" description="Helical" evidence="2">
    <location>
        <begin position="156"/>
        <end position="176"/>
    </location>
</feature>
<feature type="topological domain" description="Lumenal" evidence="2">
    <location>
        <begin position="177"/>
        <end position="198"/>
    </location>
</feature>
<feature type="transmembrane region" description="Helical" evidence="2">
    <location>
        <begin position="199"/>
        <end position="219"/>
    </location>
</feature>
<feature type="topological domain" description="Cytoplasmic" evidence="2">
    <location>
        <position position="220"/>
    </location>
</feature>
<feature type="transmembrane region" description="Helical" evidence="2">
    <location>
        <begin position="221"/>
        <end position="241"/>
    </location>
</feature>
<feature type="topological domain" description="Lumenal" evidence="2">
    <location>
        <begin position="242"/>
        <end position="272"/>
    </location>
</feature>
<feature type="transmembrane region" description="Helical" evidence="2">
    <location>
        <begin position="273"/>
        <end position="293"/>
    </location>
</feature>
<feature type="topological domain" description="Cytoplasmic" evidence="2">
    <location>
        <begin position="294"/>
        <end position="333"/>
    </location>
</feature>
<feature type="transmembrane region" description="Helical" evidence="2">
    <location>
        <begin position="334"/>
        <end position="354"/>
    </location>
</feature>
<feature type="topological domain" description="Lumenal" evidence="2">
    <location>
        <begin position="355"/>
        <end position="376"/>
    </location>
</feature>
<feature type="transmembrane region" description="Helical" evidence="2">
    <location>
        <begin position="377"/>
        <end position="397"/>
    </location>
</feature>
<feature type="topological domain" description="Cytoplasmic" evidence="2">
    <location>
        <begin position="398"/>
        <end position="401"/>
    </location>
</feature>
<feature type="transmembrane region" description="Helical" evidence="2">
    <location>
        <begin position="402"/>
        <end position="422"/>
    </location>
</feature>
<feature type="topological domain" description="Lumenal" evidence="2">
    <location>
        <begin position="423"/>
        <end position="442"/>
    </location>
</feature>
<name>ALG3_NEUCR</name>
<evidence type="ECO:0000250" key="1">
    <source>
        <dbReference type="UniProtKB" id="P38179"/>
    </source>
</evidence>
<evidence type="ECO:0000255" key="2"/>
<evidence type="ECO:0000305" key="3"/>
<keyword id="KW-0256">Endoplasmic reticulum</keyword>
<keyword id="KW-0328">Glycosyltransferase</keyword>
<keyword id="KW-0472">Membrane</keyword>
<keyword id="KW-1185">Reference proteome</keyword>
<keyword id="KW-0808">Transferase</keyword>
<keyword id="KW-0812">Transmembrane</keyword>
<keyword id="KW-1133">Transmembrane helix</keyword>
<gene>
    <name type="primary">alg-3</name>
    <name type="ORF">NCU06552</name>
</gene>
<proteinExistence type="inferred from homology"/>
<protein>
    <recommendedName>
        <fullName evidence="1">Dol-P-Man:Man(5)GlcNAc(2)-PP-Dol alpha-1,3-mannosyltransferase</fullName>
        <ecNumber evidence="1">2.4.1.258</ecNumber>
    </recommendedName>
    <alternativeName>
        <fullName>Asparagine-linked glycosylation protein 6</fullName>
    </alternativeName>
    <alternativeName>
        <fullName>Dol-P-Man-dependent alpha(1-3)-mannosyltransferase</fullName>
    </alternativeName>
    <alternativeName>
        <fullName>Dolichyl-P-Man:Man(5)GlcNAc(2)-PP-dolichyl mannosyltransferase</fullName>
    </alternativeName>
</protein>
<sequence length="442" mass="49480">MAAPSSRPESNPPLYKQALDFALDVANGRHALSKLIPPALFLVDALLCGLIIWKVPYTEIDWAAYMEQVSQILSGERDYTKVRGGTGPLVYPAAHVYIYTGLYHLTDEGRNILLAQQLFAGLYMVTLAVVMGCYWQAKAPPYLFPLLTLSKRLHSIFVLRCFNDCFAVLFLWLAIFFFQRRNWQAGALLYTLGLGVKMTLLLSLPAVGIVLFLGSGSFVTTLQLVATMGLVQILIGVPFLAHYPTEYLSRAFELSRQFFFKWTVNWRFVGEEIFLSKGFALTLLALHVLVLGIFITTRWIKPARKSLVQLISPVLLAGKPPLTVPEHRAAARDVTPRYIMTTILSANAVGLLFARSLHYQFYAYVAWSTPFLLWRAGLHPVLVYLLWAVHEWAWNVFPSTPASSAVVVGVLGVTVAGVWFGAREEWEPGMKSSSKKEEAAMR</sequence>